<gene>
    <name evidence="1" type="primary">SEY1</name>
    <name type="ORF">CTRG_03725</name>
</gene>
<evidence type="ECO:0000255" key="1">
    <source>
        <dbReference type="HAMAP-Rule" id="MF_03109"/>
    </source>
</evidence>
<evidence type="ECO:0000255" key="2">
    <source>
        <dbReference type="PROSITE-ProRule" id="PRU01052"/>
    </source>
</evidence>
<evidence type="ECO:0000256" key="3">
    <source>
        <dbReference type="SAM" id="MobiDB-lite"/>
    </source>
</evidence>
<protein>
    <recommendedName>
        <fullName evidence="1">Protein SEY1</fullName>
        <ecNumber evidence="1">3.6.5.-</ecNumber>
    </recommendedName>
</protein>
<sequence>MSSELSEGELSHTSSSSSFVPVDQRQLQDAIQIINEEKRFNQSVLEYINKTAPADVGNNYHIISVFGSQSTGKSTLLNKLFNTNFDVMDESNRQQTTKGIWLAFSPVVSTTSGHTSSKSNILVMDVEGTDGRERGEDQDFERKAALFALSTSEILIINIWETQVGLYQGANMGLLKTVFEVNLSLFGKSKLEKHDDHKVLLLIVIRDYVGVTPVESLAKTFTQDLINMWASLAKPAELEHLQFADFFDVDFHALNHKVLQPKEFSEGINKLGDRLVVGDELFKPEYHHQVPIDGWVMYAGNCWEQIETNKDLDLPTQQILVAQFKCDEIVENVFQEFLKKFEQLFGEPQAEPDYEQIGALFSDLRNDTLEDYDISASKYNKSVYEQKRVKLISLVNEKFKEVFDFYAKELSSTMLKKFHSDVVALKGKNFAASVKELSTGLIASIVTTLGLISLQGDLSSNEVTTALSKDIADIVSKQQVIELNSIVNRAVKKLTNSLSKSIQFELGDPNENTWDTVLQQFNSLSQEVLTKYDGDFGLGTTDEQNKQALDRFQFKSWTSFYESMHKLISKEKLLVLLQDRFDDVFRYDENGLPKLYLNEADLEKTFTESKQHALKVLPILTIAKLSDGSEIVPEIDIFDHKLREKYLGVADEDSDDEDDDEHCFAEIVTEQEKSEVLAKFKKEVDAKYIETKRSIVQHITQIPYYIYLVIVFLGWNEFMAIIRNPLLFSLALLLGASVYILYKLNLLKPAIVVAQRTFDETVAMGKEKLREILIDDHETQGRNLGKIAGKNPSAPAEEYSDNIELDDM</sequence>
<dbReference type="EC" id="3.6.5.-" evidence="1"/>
<dbReference type="EMBL" id="GG692398">
    <property type="protein sequence ID" value="EER33300.1"/>
    <property type="molecule type" value="Genomic_DNA"/>
</dbReference>
<dbReference type="RefSeq" id="XP_002549428.1">
    <property type="nucleotide sequence ID" value="XM_002549382.1"/>
</dbReference>
<dbReference type="SMR" id="C5MCD3"/>
<dbReference type="STRING" id="294747.C5MCD3"/>
<dbReference type="GeneID" id="8297859"/>
<dbReference type="KEGG" id="ctp:CTRG_03725"/>
<dbReference type="eggNOG" id="KOG2203">
    <property type="taxonomic scope" value="Eukaryota"/>
</dbReference>
<dbReference type="HOGENOM" id="CLU_011270_0_0_1"/>
<dbReference type="OrthoDB" id="1597724at2759"/>
<dbReference type="Proteomes" id="UP000002037">
    <property type="component" value="Unassembled WGS sequence"/>
</dbReference>
<dbReference type="GO" id="GO:0005789">
    <property type="term" value="C:endoplasmic reticulum membrane"/>
    <property type="evidence" value="ECO:0007669"/>
    <property type="project" value="UniProtKB-SubCell"/>
</dbReference>
<dbReference type="GO" id="GO:0005525">
    <property type="term" value="F:GTP binding"/>
    <property type="evidence" value="ECO:0007669"/>
    <property type="project" value="UniProtKB-UniRule"/>
</dbReference>
<dbReference type="GO" id="GO:0003924">
    <property type="term" value="F:GTPase activity"/>
    <property type="evidence" value="ECO:0007669"/>
    <property type="project" value="UniProtKB-UniRule"/>
</dbReference>
<dbReference type="GO" id="GO:0016320">
    <property type="term" value="P:endoplasmic reticulum membrane fusion"/>
    <property type="evidence" value="ECO:0007669"/>
    <property type="project" value="TreeGrafter"/>
</dbReference>
<dbReference type="CDD" id="cd01851">
    <property type="entry name" value="GBP"/>
    <property type="match status" value="1"/>
</dbReference>
<dbReference type="FunFam" id="3.40.50.300:FF:000727">
    <property type="entry name" value="Protein SEY1 homolog"/>
    <property type="match status" value="1"/>
</dbReference>
<dbReference type="Gene3D" id="3.40.50.300">
    <property type="entry name" value="P-loop containing nucleotide triphosphate hydrolases"/>
    <property type="match status" value="1"/>
</dbReference>
<dbReference type="HAMAP" id="MF_03109">
    <property type="entry name" value="Sey1"/>
    <property type="match status" value="1"/>
</dbReference>
<dbReference type="InterPro" id="IPR030386">
    <property type="entry name" value="G_GB1_RHD3_dom"/>
</dbReference>
<dbReference type="InterPro" id="IPR027417">
    <property type="entry name" value="P-loop_NTPase"/>
</dbReference>
<dbReference type="InterPro" id="IPR008803">
    <property type="entry name" value="RHD3/Sey1"/>
</dbReference>
<dbReference type="InterPro" id="IPR046758">
    <property type="entry name" value="Sey1/RHD3-like_3HB"/>
</dbReference>
<dbReference type="PANTHER" id="PTHR45923">
    <property type="entry name" value="PROTEIN SEY1"/>
    <property type="match status" value="1"/>
</dbReference>
<dbReference type="PANTHER" id="PTHR45923:SF2">
    <property type="entry name" value="PROTEIN SEY1"/>
    <property type="match status" value="1"/>
</dbReference>
<dbReference type="Pfam" id="PF05879">
    <property type="entry name" value="RHD3_GTPase"/>
    <property type="match status" value="1"/>
</dbReference>
<dbReference type="Pfam" id="PF20428">
    <property type="entry name" value="Sey1_3HB"/>
    <property type="match status" value="1"/>
</dbReference>
<dbReference type="SUPFAM" id="SSF52540">
    <property type="entry name" value="P-loop containing nucleoside triphosphate hydrolases"/>
    <property type="match status" value="1"/>
</dbReference>
<dbReference type="PROSITE" id="PS51715">
    <property type="entry name" value="G_GB1_RHD3"/>
    <property type="match status" value="1"/>
</dbReference>
<keyword id="KW-0256">Endoplasmic reticulum</keyword>
<keyword id="KW-0342">GTP-binding</keyword>
<keyword id="KW-0378">Hydrolase</keyword>
<keyword id="KW-0472">Membrane</keyword>
<keyword id="KW-0547">Nucleotide-binding</keyword>
<keyword id="KW-1185">Reference proteome</keyword>
<keyword id="KW-0812">Transmembrane</keyword>
<keyword id="KW-1133">Transmembrane helix</keyword>
<organism>
    <name type="scientific">Candida tropicalis (strain ATCC MYA-3404 / T1)</name>
    <name type="common">Yeast</name>
    <dbReference type="NCBI Taxonomy" id="294747"/>
    <lineage>
        <taxon>Eukaryota</taxon>
        <taxon>Fungi</taxon>
        <taxon>Dikarya</taxon>
        <taxon>Ascomycota</taxon>
        <taxon>Saccharomycotina</taxon>
        <taxon>Pichiomycetes</taxon>
        <taxon>Debaryomycetaceae</taxon>
        <taxon>Candida/Lodderomyces clade</taxon>
        <taxon>Candida</taxon>
    </lineage>
</organism>
<comment type="function">
    <text evidence="1">Cooperates with the reticulon proteins and tubule-shaping DP1 family proteins to generate and maintain the structure of the tubular endoplasmic reticulum network. Has GTPase activity, which is required for its function in ER organization.</text>
</comment>
<comment type="subcellular location">
    <subcellularLocation>
        <location evidence="1">Endoplasmic reticulum membrane</location>
        <topology evidence="1">Multi-pass membrane protein</topology>
    </subcellularLocation>
    <text evidence="1">Enriched in the cortical ER. Concentrated in punctae along the ER tubules.</text>
</comment>
<comment type="similarity">
    <text evidence="2">Belongs to the TRAFAC class dynamin-like GTPase superfamily. GB1/RHD3 GTPase family. RHD3 subfamily.</text>
</comment>
<name>SEY1_CANTT</name>
<accession>C5MCD3</accession>
<proteinExistence type="inferred from homology"/>
<reference key="1">
    <citation type="journal article" date="2009" name="Nature">
        <title>Evolution of pathogenicity and sexual reproduction in eight Candida genomes.</title>
        <authorList>
            <person name="Butler G."/>
            <person name="Rasmussen M.D."/>
            <person name="Lin M.F."/>
            <person name="Santos M.A.S."/>
            <person name="Sakthikumar S."/>
            <person name="Munro C.A."/>
            <person name="Rheinbay E."/>
            <person name="Grabherr M."/>
            <person name="Forche A."/>
            <person name="Reedy J.L."/>
            <person name="Agrafioti I."/>
            <person name="Arnaud M.B."/>
            <person name="Bates S."/>
            <person name="Brown A.J.P."/>
            <person name="Brunke S."/>
            <person name="Costanzo M.C."/>
            <person name="Fitzpatrick D.A."/>
            <person name="de Groot P.W.J."/>
            <person name="Harris D."/>
            <person name="Hoyer L.L."/>
            <person name="Hube B."/>
            <person name="Klis F.M."/>
            <person name="Kodira C."/>
            <person name="Lennard N."/>
            <person name="Logue M.E."/>
            <person name="Martin R."/>
            <person name="Neiman A.M."/>
            <person name="Nikolaou E."/>
            <person name="Quail M.A."/>
            <person name="Quinn J."/>
            <person name="Santos M.C."/>
            <person name="Schmitzberger F.F."/>
            <person name="Sherlock G."/>
            <person name="Shah P."/>
            <person name="Silverstein K.A.T."/>
            <person name="Skrzypek M.S."/>
            <person name="Soll D."/>
            <person name="Staggs R."/>
            <person name="Stansfield I."/>
            <person name="Stumpf M.P.H."/>
            <person name="Sudbery P.E."/>
            <person name="Srikantha T."/>
            <person name="Zeng Q."/>
            <person name="Berman J."/>
            <person name="Berriman M."/>
            <person name="Heitman J."/>
            <person name="Gow N.A.R."/>
            <person name="Lorenz M.C."/>
            <person name="Birren B.W."/>
            <person name="Kellis M."/>
            <person name="Cuomo C.A."/>
        </authorList>
    </citation>
    <scope>NUCLEOTIDE SEQUENCE [LARGE SCALE GENOMIC DNA]</scope>
    <source>
        <strain>ATCC MYA-3404 / T1</strain>
    </source>
</reference>
<feature type="chain" id="PRO_0000384978" description="Protein SEY1">
    <location>
        <begin position="1"/>
        <end position="808"/>
    </location>
</feature>
<feature type="topological domain" description="Cytoplasmic" evidence="1">
    <location>
        <begin position="1"/>
        <end position="701"/>
    </location>
</feature>
<feature type="transmembrane region" description="Helical" evidence="1">
    <location>
        <begin position="702"/>
        <end position="722"/>
    </location>
</feature>
<feature type="topological domain" description="Lumenal" evidence="1">
    <location>
        <begin position="723"/>
        <end position="725"/>
    </location>
</feature>
<feature type="transmembrane region" description="Helical" evidence="1">
    <location>
        <begin position="726"/>
        <end position="746"/>
    </location>
</feature>
<feature type="topological domain" description="Cytoplasmic" evidence="1">
    <location>
        <begin position="747"/>
        <end position="808"/>
    </location>
</feature>
<feature type="domain" description="GB1/RHD3-type G" evidence="2">
    <location>
        <begin position="57"/>
        <end position="286"/>
    </location>
</feature>
<feature type="region of interest" description="Disordered" evidence="3">
    <location>
        <begin position="1"/>
        <end position="21"/>
    </location>
</feature>
<feature type="binding site" evidence="1">
    <location>
        <begin position="67"/>
        <end position="74"/>
    </location>
    <ligand>
        <name>GTP</name>
        <dbReference type="ChEBI" id="CHEBI:37565"/>
    </ligand>
</feature>